<organism>
    <name type="scientific">Talaromyces stipitatus (strain ATCC 10500 / CBS 375.48 / QM 6759 / NRRL 1006)</name>
    <name type="common">Penicillium stipitatum</name>
    <dbReference type="NCBI Taxonomy" id="441959"/>
    <lineage>
        <taxon>Eukaryota</taxon>
        <taxon>Fungi</taxon>
        <taxon>Dikarya</taxon>
        <taxon>Ascomycota</taxon>
        <taxon>Pezizomycotina</taxon>
        <taxon>Eurotiomycetes</taxon>
        <taxon>Eurotiomycetidae</taxon>
        <taxon>Eurotiales</taxon>
        <taxon>Trichocomaceae</taxon>
        <taxon>Talaromyces</taxon>
        <taxon>Talaromyces sect. Talaromyces</taxon>
    </lineage>
</organism>
<dbReference type="EMBL" id="EQ962652">
    <property type="protein sequence ID" value="EED22885.1"/>
    <property type="molecule type" value="Genomic_DNA"/>
</dbReference>
<dbReference type="RefSeq" id="XP_002340272.1">
    <property type="nucleotide sequence ID" value="XM_002340231.1"/>
</dbReference>
<dbReference type="SMR" id="B8LYF6"/>
<dbReference type="FunCoup" id="B8LYF6">
    <property type="interactions" value="54"/>
</dbReference>
<dbReference type="STRING" id="441959.B8LYF6"/>
<dbReference type="GeneID" id="8104416"/>
<dbReference type="VEuPathDB" id="FungiDB:TSTA_063640"/>
<dbReference type="eggNOG" id="ENOG502QUN5">
    <property type="taxonomic scope" value="Eukaryota"/>
</dbReference>
<dbReference type="HOGENOM" id="CLU_026505_1_0_1"/>
<dbReference type="InParanoid" id="B8LYF6"/>
<dbReference type="OMA" id="VPGYRQI"/>
<dbReference type="OrthoDB" id="2103793at2759"/>
<dbReference type="PhylomeDB" id="B8LYF6"/>
<dbReference type="Proteomes" id="UP000001745">
    <property type="component" value="Unassembled WGS sequence"/>
</dbReference>
<dbReference type="GO" id="GO:0032865">
    <property type="term" value="C:ERMES complex"/>
    <property type="evidence" value="ECO:0007669"/>
    <property type="project" value="UniProtKB-UniRule"/>
</dbReference>
<dbReference type="GO" id="GO:0001401">
    <property type="term" value="C:SAM complex"/>
    <property type="evidence" value="ECO:0007669"/>
    <property type="project" value="TreeGrafter"/>
</dbReference>
<dbReference type="GO" id="GO:0051654">
    <property type="term" value="P:establishment of mitochondrion localization"/>
    <property type="evidence" value="ECO:0007669"/>
    <property type="project" value="TreeGrafter"/>
</dbReference>
<dbReference type="GO" id="GO:0000002">
    <property type="term" value="P:mitochondrial genome maintenance"/>
    <property type="evidence" value="ECO:0007669"/>
    <property type="project" value="UniProtKB-UniRule"/>
</dbReference>
<dbReference type="GO" id="GO:0070096">
    <property type="term" value="P:mitochondrial outer membrane translocase complex assembly"/>
    <property type="evidence" value="ECO:0007669"/>
    <property type="project" value="UniProtKB-UniRule"/>
</dbReference>
<dbReference type="GO" id="GO:1990456">
    <property type="term" value="P:mitochondrion-endoplasmic reticulum membrane tethering"/>
    <property type="evidence" value="ECO:0007669"/>
    <property type="project" value="UniProtKB-UniRule"/>
</dbReference>
<dbReference type="GO" id="GO:0015914">
    <property type="term" value="P:phospholipid transport"/>
    <property type="evidence" value="ECO:0007669"/>
    <property type="project" value="TreeGrafter"/>
</dbReference>
<dbReference type="GO" id="GO:0045040">
    <property type="term" value="P:protein insertion into mitochondrial outer membrane"/>
    <property type="evidence" value="ECO:0007669"/>
    <property type="project" value="UniProtKB-UniRule"/>
</dbReference>
<dbReference type="HAMAP" id="MF_03102">
    <property type="entry name" value="Mdm10"/>
    <property type="match status" value="1"/>
</dbReference>
<dbReference type="InterPro" id="IPR027539">
    <property type="entry name" value="Mdm10"/>
</dbReference>
<dbReference type="PANTHER" id="PTHR28035">
    <property type="entry name" value="MITOCHONDRIAL DISTRIBUTION AND MORPHOLOGY PROTEIN 10"/>
    <property type="match status" value="1"/>
</dbReference>
<dbReference type="PANTHER" id="PTHR28035:SF1">
    <property type="entry name" value="MITOCHONDRIAL DISTRIBUTION AND MORPHOLOGY PROTEIN 10"/>
    <property type="match status" value="1"/>
</dbReference>
<dbReference type="Pfam" id="PF12519">
    <property type="entry name" value="MDM10"/>
    <property type="match status" value="1"/>
</dbReference>
<reference key="1">
    <citation type="journal article" date="2015" name="Genome Announc.">
        <title>Genome sequence of the AIDS-associated pathogen Penicillium marneffei (ATCC18224) and its near taxonomic relative Talaromyces stipitatus (ATCC10500).</title>
        <authorList>
            <person name="Nierman W.C."/>
            <person name="Fedorova-Abrams N.D."/>
            <person name="Andrianopoulos A."/>
        </authorList>
    </citation>
    <scope>NUCLEOTIDE SEQUENCE [LARGE SCALE GENOMIC DNA]</scope>
    <source>
        <strain>ATCC 10500 / CBS 375.48 / QM 6759 / NRRL 1006</strain>
    </source>
</reference>
<protein>
    <recommendedName>
        <fullName evidence="1">Mitochondrial distribution and morphology protein 10</fullName>
    </recommendedName>
    <alternativeName>
        <fullName evidence="1">Mitochondrial inheritance component mdm10</fullName>
    </alternativeName>
</protein>
<gene>
    <name type="primary">mdm10</name>
    <name type="ORF">TSTA_063640</name>
</gene>
<sequence>MLEFMDYVQLAFAEATRWNQDNSYSSLTAIAESLLDFHVPERLQVHLSSLSTPHFATSYTLGTVGLIDGSVSYLFSTVPLNNTPSQSGVIPLRRLVRGYRQIEAPVPPIRNWGWDAIPSHDSSQIIDSADINQDDIVRKATLLHATLHLPPPSTLNALFQRRISPTTQITAALVSTQGPPLIKSAPSAALLAQISHDTGTFSNEYLFSTDNALFGWRGLWNIGLDPSPGKQSTDKVSLLSAGAEAYYSPISSLVGLSTGLKFTTLPAAGRALSSSSSSSPGSNPSPISSFPYTLTLTLTPLTGSLSTTYSARASPNLAFSSRFGFNVYSWESEMVAGCEIWRKSPRTQPAEADDGLDWARRKMGIVKERAAEKISALSSSSSTPQAVEESEGDSVVKIRVDQSWNVRLLWEGRVKSLLVTAGVSLGPGTFTALSSGPASPTSSSAPVAMAGAPPTSRPSYWQGVGVSILYSS</sequence>
<keyword id="KW-0472">Membrane</keyword>
<keyword id="KW-0496">Mitochondrion</keyword>
<keyword id="KW-1000">Mitochondrion outer membrane</keyword>
<keyword id="KW-1185">Reference proteome</keyword>
<keyword id="KW-0812">Transmembrane</keyword>
<keyword id="KW-1134">Transmembrane beta strand</keyword>
<accession>B8LYF6</accession>
<name>MDM10_TALSN</name>
<proteinExistence type="inferred from homology"/>
<evidence type="ECO:0000255" key="1">
    <source>
        <dbReference type="HAMAP-Rule" id="MF_03102"/>
    </source>
</evidence>
<evidence type="ECO:0000256" key="2">
    <source>
        <dbReference type="SAM" id="MobiDB-lite"/>
    </source>
</evidence>
<feature type="chain" id="PRO_0000384202" description="Mitochondrial distribution and morphology protein 10">
    <location>
        <begin position="1"/>
        <end position="472"/>
    </location>
</feature>
<feature type="region of interest" description="Disordered" evidence="2">
    <location>
        <begin position="433"/>
        <end position="454"/>
    </location>
</feature>
<feature type="compositionally biased region" description="Low complexity" evidence="2">
    <location>
        <begin position="433"/>
        <end position="450"/>
    </location>
</feature>
<comment type="function">
    <text evidence="1">Component of the ERMES/MDM complex, which serves as a molecular tether to connect the endoplasmic reticulum and mitochondria. Components of this complex are involved in the control of mitochondrial shape and protein biogenesis and may function in phospholipid exchange. mdm10 is involved in the late assembly steps of the general translocase of the mitochondrial outer membrane (TOM complex). Functions in the tom40-specific route of the assembly of outer membrane beta-barrel proteins, including the association of tom40 with the receptor tom22 and small TOM proteins. Can associate with the SAM(core) complex as well as the mdm12-mmm1 complex, both involved in late steps of the major beta-barrel assembly pathway, that is responsible for biogenesis of all outer membrane beta-barrel proteins. May act as a switch that shuttles between both complexes and channels precursor proteins into the tom40-specific pathway. Plays a role in mitochondrial morphology and in the inheritance of mitochondria.</text>
</comment>
<comment type="subunit">
    <text evidence="1">Component of the ER-mitochondria encounter structure (ERMES) or MDM complex, composed of mmm1, mdm10, mdm12 and mdm34. Associates with the mitochondrial outer membrane sorting assembly machinery SAM(core) complex.</text>
</comment>
<comment type="subcellular location">
    <subcellularLocation>
        <location evidence="1">Mitochondrion outer membrane</location>
        <topology evidence="1">Multi-pass membrane protein</topology>
    </subcellularLocation>
    <text evidence="1">The ERMES/MDM complex localizes to a few discrete foci (around 10 per single cell), that represent mitochondria-endoplasmic reticulum junctions. These foci are often found next to mtDNA nucleoids.</text>
</comment>
<comment type="domain">
    <text>Lacks alpha-helical transmembrane segments, suggesting that it resides in the membrane via beta-sheet conformations similar to those predicted for other outer membrane proteins and porin.</text>
</comment>
<comment type="similarity">
    <text evidence="1">Belongs to the MDM10 family.</text>
</comment>